<feature type="chain" id="PRO_0000050120" description="Meiotic recombination 1 protein">
    <location>
        <begin position="1"/>
        <end position="270"/>
    </location>
</feature>
<feature type="domain" description="KH" evidence="1">
    <location>
        <begin position="191"/>
        <end position="225"/>
    </location>
</feature>
<organism>
    <name type="scientific">Saccharomyces cerevisiae (strain ATCC 204508 / S288c)</name>
    <name type="common">Baker's yeast</name>
    <dbReference type="NCBI Taxonomy" id="559292"/>
    <lineage>
        <taxon>Eukaryota</taxon>
        <taxon>Fungi</taxon>
        <taxon>Dikarya</taxon>
        <taxon>Ascomycota</taxon>
        <taxon>Saccharomycotina</taxon>
        <taxon>Saccharomycetes</taxon>
        <taxon>Saccharomycetales</taxon>
        <taxon>Saccharomycetaceae</taxon>
        <taxon>Saccharomyces</taxon>
    </lineage>
</organism>
<gene>
    <name type="primary">MER1</name>
    <name type="ordered locus">YNL210W</name>
    <name type="ORF">N1330</name>
</gene>
<name>MER1_YEAST</name>
<proteinExistence type="evidence at transcript level"/>
<sequence length="270" mass="31111">MSNQHSPQPFCLDTKLVKLLEELQEGKQFNNKNIFPEKALYLKLALDYSFFRKNLLEFCVHLDKIKGVIRPNYDTIYILCLLEVDLLNLVFTDNILEICLPRFVSREDLRVFNNTFYTYHDNRLRILQEDFSQLFKKIKTKASVLCFTVEEIFLTNQEILPQNSTVAELQKSTNKVQTNGPQRHDFIVTLEIKLNKTQITFLIGAKGTRIESLREKSGASIKIIPISDKMTAHERNHPESVQQTILISGDLYSIALAVTSIESALITLDL</sequence>
<keyword id="KW-0469">Meiosis</keyword>
<keyword id="KW-1185">Reference proteome</keyword>
<keyword id="KW-0694">RNA-binding</keyword>
<protein>
    <recommendedName>
        <fullName>Meiotic recombination 1 protein</fullName>
    </recommendedName>
</protein>
<reference key="1">
    <citation type="journal article" date="1990" name="Mol. Cell. Biol.">
        <title>MER1, a yeast gene required for chromosome pairing and genetic recombination, is induced in meiosis.</title>
        <authorList>
            <person name="Engebrecht J."/>
            <person name="Roeder G.S."/>
        </authorList>
    </citation>
    <scope>NUCLEOTIDE SEQUENCE [GENOMIC DNA]</scope>
</reference>
<reference key="2">
    <citation type="journal article" date="1995" name="Yeast">
        <title>The sequence of a 13.5 kb DNA segment from the left arm of yeast chromosome XIV reveals MER1; RAP1; a new putative member of the DNA replication complex and a new putative serine/threonine phosphatase gene.</title>
        <authorList>
            <person name="Coster F."/>
            <person name="van Dyck L."/>
            <person name="Jonniaux J.-L."/>
            <person name="Purnelle B."/>
            <person name="Goffeau A."/>
        </authorList>
    </citation>
    <scope>NUCLEOTIDE SEQUENCE [GENOMIC DNA]</scope>
    <source>
        <strain>ATCC 96604 / S288c / FY1679</strain>
    </source>
</reference>
<reference key="3">
    <citation type="journal article" date="1997" name="Nature">
        <title>The nucleotide sequence of Saccharomyces cerevisiae chromosome XIV and its evolutionary implications.</title>
        <authorList>
            <person name="Philippsen P."/>
            <person name="Kleine K."/>
            <person name="Poehlmann R."/>
            <person name="Duesterhoeft A."/>
            <person name="Hamberg K."/>
            <person name="Hegemann J.H."/>
            <person name="Obermaier B."/>
            <person name="Urrestarazu L.A."/>
            <person name="Aert R."/>
            <person name="Albermann K."/>
            <person name="Altmann R."/>
            <person name="Andre B."/>
            <person name="Baladron V."/>
            <person name="Ballesta J.P.G."/>
            <person name="Becam A.-M."/>
            <person name="Beinhauer J.D."/>
            <person name="Boskovic J."/>
            <person name="Buitrago M.J."/>
            <person name="Bussereau F."/>
            <person name="Coster F."/>
            <person name="Crouzet M."/>
            <person name="D'Angelo M."/>
            <person name="Dal Pero F."/>
            <person name="De Antoni A."/>
            <person name="del Rey F."/>
            <person name="Doignon F."/>
            <person name="Domdey H."/>
            <person name="Dubois E."/>
            <person name="Fiedler T.A."/>
            <person name="Fleig U."/>
            <person name="Floeth M."/>
            <person name="Fritz C."/>
            <person name="Gaillardin C."/>
            <person name="Garcia-Cantalejo J.M."/>
            <person name="Glansdorff N."/>
            <person name="Goffeau A."/>
            <person name="Gueldener U."/>
            <person name="Herbert C.J."/>
            <person name="Heumann K."/>
            <person name="Heuss-Neitzel D."/>
            <person name="Hilbert H."/>
            <person name="Hinni K."/>
            <person name="Iraqui Houssaini I."/>
            <person name="Jacquet M."/>
            <person name="Jimenez A."/>
            <person name="Jonniaux J.-L."/>
            <person name="Karpfinger-Hartl L."/>
            <person name="Lanfranchi G."/>
            <person name="Lepingle A."/>
            <person name="Levesque H."/>
            <person name="Lyck R."/>
            <person name="Maftahi M."/>
            <person name="Mallet L."/>
            <person name="Maurer C.T.C."/>
            <person name="Messenguy F."/>
            <person name="Mewes H.-W."/>
            <person name="Moestl D."/>
            <person name="Nasr F."/>
            <person name="Nicaud J.-M."/>
            <person name="Niedenthal R.K."/>
            <person name="Pandolfo D."/>
            <person name="Pierard A."/>
            <person name="Piravandi E."/>
            <person name="Planta R.J."/>
            <person name="Pohl T.M."/>
            <person name="Purnelle B."/>
            <person name="Rebischung C."/>
            <person name="Remacha M.A."/>
            <person name="Revuelta J.L."/>
            <person name="Rinke M."/>
            <person name="Saiz J.E."/>
            <person name="Sartorello F."/>
            <person name="Scherens B."/>
            <person name="Sen-Gupta M."/>
            <person name="Soler-Mira A."/>
            <person name="Urbanus J.H.M."/>
            <person name="Valle G."/>
            <person name="Van Dyck L."/>
            <person name="Verhasselt P."/>
            <person name="Vierendeels F."/>
            <person name="Vissers S."/>
            <person name="Voet M."/>
            <person name="Volckaert G."/>
            <person name="Wach A."/>
            <person name="Wambutt R."/>
            <person name="Wedler H."/>
            <person name="Zollner A."/>
            <person name="Hani J."/>
        </authorList>
    </citation>
    <scope>NUCLEOTIDE SEQUENCE [LARGE SCALE GENOMIC DNA]</scope>
    <source>
        <strain>ATCC 204508 / S288c</strain>
    </source>
</reference>
<reference key="4">
    <citation type="journal article" date="2014" name="G3 (Bethesda)">
        <title>The reference genome sequence of Saccharomyces cerevisiae: Then and now.</title>
        <authorList>
            <person name="Engel S.R."/>
            <person name="Dietrich F.S."/>
            <person name="Fisk D.G."/>
            <person name="Binkley G."/>
            <person name="Balakrishnan R."/>
            <person name="Costanzo M.C."/>
            <person name="Dwight S.S."/>
            <person name="Hitz B.C."/>
            <person name="Karra K."/>
            <person name="Nash R.S."/>
            <person name="Weng S."/>
            <person name="Wong E.D."/>
            <person name="Lloyd P."/>
            <person name="Skrzypek M.S."/>
            <person name="Miyasato S.R."/>
            <person name="Simison M."/>
            <person name="Cherry J.M."/>
        </authorList>
    </citation>
    <scope>GENOME REANNOTATION</scope>
    <source>
        <strain>ATCC 204508 / S288c</strain>
    </source>
</reference>
<reference key="5">
    <citation type="journal article" date="2007" name="Genome Res.">
        <title>Approaching a complete repository of sequence-verified protein-encoding clones for Saccharomyces cerevisiae.</title>
        <authorList>
            <person name="Hu Y."/>
            <person name="Rolfs A."/>
            <person name="Bhullar B."/>
            <person name="Murthy T.V.S."/>
            <person name="Zhu C."/>
            <person name="Berger M.F."/>
            <person name="Camargo A.A."/>
            <person name="Kelley F."/>
            <person name="McCarron S."/>
            <person name="Jepson D."/>
            <person name="Richardson A."/>
            <person name="Raphael J."/>
            <person name="Moreira D."/>
            <person name="Taycher E."/>
            <person name="Zuo D."/>
            <person name="Mohr S."/>
            <person name="Kane M.F."/>
            <person name="Williamson J."/>
            <person name="Simpson A.J.G."/>
            <person name="Bulyk M.L."/>
            <person name="Harlow E."/>
            <person name="Marsischky G."/>
            <person name="Kolodner R.D."/>
            <person name="LaBaer J."/>
        </authorList>
    </citation>
    <scope>NUCLEOTIDE SEQUENCE [GENOMIC DNA]</scope>
    <source>
        <strain>ATCC 204508 / S288c</strain>
    </source>
</reference>
<evidence type="ECO:0000255" key="1">
    <source>
        <dbReference type="PROSITE-ProRule" id="PRU00117"/>
    </source>
</evidence>
<accession>P16523</accession>
<accession>D6W0Y0</accession>
<comment type="function">
    <text>Required for chromosome pairing and genetic recombination. MER1 may function to bring the axial elements of the synaptonemal complex corresponding to homologous chromosomes together by initiating recombination. MER1 might be responsible for regulating the MER2 gene and/or gene product.</text>
</comment>
<comment type="developmental stage">
    <text>MER1 is synthesized only during meiosis.</text>
</comment>
<comment type="induction">
    <text>Its expression is meiotically induced and required the IME1 protein.</text>
</comment>
<dbReference type="EMBL" id="M31304">
    <property type="protein sequence ID" value="AAA34771.1"/>
    <property type="molecule type" value="Genomic_DNA"/>
</dbReference>
<dbReference type="EMBL" id="X78898">
    <property type="protein sequence ID" value="CAA55497.1"/>
    <property type="molecule type" value="Genomic_DNA"/>
</dbReference>
<dbReference type="EMBL" id="Z71486">
    <property type="protein sequence ID" value="CAA96112.1"/>
    <property type="molecule type" value="Genomic_DNA"/>
</dbReference>
<dbReference type="EMBL" id="AY693028">
    <property type="protein sequence ID" value="AAT93047.1"/>
    <property type="molecule type" value="Genomic_DNA"/>
</dbReference>
<dbReference type="EMBL" id="BK006947">
    <property type="protein sequence ID" value="DAA10346.1"/>
    <property type="molecule type" value="Genomic_DNA"/>
</dbReference>
<dbReference type="PIR" id="A34717">
    <property type="entry name" value="A34717"/>
</dbReference>
<dbReference type="RefSeq" id="NP_014189.1">
    <property type="nucleotide sequence ID" value="NM_001183048.1"/>
</dbReference>
<dbReference type="SMR" id="P16523"/>
<dbReference type="BioGRID" id="35626">
    <property type="interactions" value="34"/>
</dbReference>
<dbReference type="DIP" id="DIP-1436N"/>
<dbReference type="FunCoup" id="P16523">
    <property type="interactions" value="96"/>
</dbReference>
<dbReference type="IntAct" id="P16523">
    <property type="interactions" value="4"/>
</dbReference>
<dbReference type="MINT" id="P16523"/>
<dbReference type="STRING" id="4932.YNL210W"/>
<dbReference type="PaxDb" id="4932-YNL210W"/>
<dbReference type="PeptideAtlas" id="P16523"/>
<dbReference type="EnsemblFungi" id="YNL210W_mRNA">
    <property type="protein sequence ID" value="YNL210W"/>
    <property type="gene ID" value="YNL210W"/>
</dbReference>
<dbReference type="GeneID" id="855511"/>
<dbReference type="KEGG" id="sce:YNL210W"/>
<dbReference type="AGR" id="SGD:S000005154"/>
<dbReference type="SGD" id="S000005154">
    <property type="gene designation" value="MER1"/>
</dbReference>
<dbReference type="VEuPathDB" id="FungiDB:YNL210W"/>
<dbReference type="eggNOG" id="ENOG502SDMY">
    <property type="taxonomic scope" value="Eukaryota"/>
</dbReference>
<dbReference type="HOGENOM" id="CLU_083073_0_0_1"/>
<dbReference type="InParanoid" id="P16523"/>
<dbReference type="OMA" id="MTAHERN"/>
<dbReference type="OrthoDB" id="442947at2759"/>
<dbReference type="BioCyc" id="YEAST:G3O-33216-MONOMER"/>
<dbReference type="BioGRID-ORCS" id="855511">
    <property type="hits" value="0 hits in 10 CRISPR screens"/>
</dbReference>
<dbReference type="PRO" id="PR:P16523"/>
<dbReference type="Proteomes" id="UP000002311">
    <property type="component" value="Chromosome XIV"/>
</dbReference>
<dbReference type="RNAct" id="P16523">
    <property type="molecule type" value="protein"/>
</dbReference>
<dbReference type="GO" id="GO:0005634">
    <property type="term" value="C:nucleus"/>
    <property type="evidence" value="ECO:0000314"/>
    <property type="project" value="SGD"/>
</dbReference>
<dbReference type="GO" id="GO:0003729">
    <property type="term" value="F:mRNA binding"/>
    <property type="evidence" value="ECO:0000314"/>
    <property type="project" value="SGD"/>
</dbReference>
<dbReference type="GO" id="GO:1990446">
    <property type="term" value="F:U1 snRNP binding"/>
    <property type="evidence" value="ECO:0000314"/>
    <property type="project" value="SGD"/>
</dbReference>
<dbReference type="GO" id="GO:0048026">
    <property type="term" value="P:positive regulation of mRNA splicing, via spliceosome"/>
    <property type="evidence" value="ECO:0000315"/>
    <property type="project" value="SGD"/>
</dbReference>
<dbReference type="GO" id="GO:0007131">
    <property type="term" value="P:reciprocal meiotic recombination"/>
    <property type="evidence" value="ECO:0000315"/>
    <property type="project" value="SGD"/>
</dbReference>
<dbReference type="Gene3D" id="3.30.1370.10">
    <property type="entry name" value="K Homology domain, type 1"/>
    <property type="match status" value="1"/>
</dbReference>
<dbReference type="InterPro" id="IPR004087">
    <property type="entry name" value="KH_dom"/>
</dbReference>
<dbReference type="InterPro" id="IPR004088">
    <property type="entry name" value="KH_dom_type_1"/>
</dbReference>
<dbReference type="InterPro" id="IPR036612">
    <property type="entry name" value="KH_dom_type_1_sf"/>
</dbReference>
<dbReference type="Pfam" id="PF00013">
    <property type="entry name" value="KH_1"/>
    <property type="match status" value="1"/>
</dbReference>
<dbReference type="SMART" id="SM00322">
    <property type="entry name" value="KH"/>
    <property type="match status" value="1"/>
</dbReference>
<dbReference type="SUPFAM" id="SSF54791">
    <property type="entry name" value="Eukaryotic type KH-domain (KH-domain type I)"/>
    <property type="match status" value="1"/>
</dbReference>
<dbReference type="PROSITE" id="PS50084">
    <property type="entry name" value="KH_TYPE_1"/>
    <property type="match status" value="1"/>
</dbReference>